<keyword id="KW-1035">Host cytoplasm</keyword>
<keyword id="KW-1040">Host Golgi apparatus</keyword>
<keyword id="KW-1048">Host nucleus</keyword>
<keyword id="KW-1185">Reference proteome</keyword>
<keyword id="KW-0946">Virion</keyword>
<keyword id="KW-0920">Virion tegument</keyword>
<comment type="function">
    <text evidence="1">Plays an essential role in cytoplasmic secondary envelopment during viral egress. Interacts with the capsid via the large tegument protein/LTP and participates in its transport to the host trans-Golgi network (TGN) where secondary envelopment occurs. Modulates tegumentation and capsid accumulation at the viral assembly complex.</text>
</comment>
<comment type="subunit">
    <text evidence="1">Interacts (via C-terminus) with the large tegument protein/LTP (via N-terminus).</text>
</comment>
<comment type="subcellular location">
    <subcellularLocation>
        <location evidence="1">Virion tegument</location>
    </subcellularLocation>
    <subcellularLocation>
        <location evidence="1">Host cytoplasm</location>
    </subcellularLocation>
    <subcellularLocation>
        <location evidence="1">Host nucleus</location>
    </subcellularLocation>
    <subcellularLocation>
        <location evidence="1">Host Golgi apparatus</location>
        <location evidence="1">Host trans-Golgi network</location>
    </subcellularLocation>
</comment>
<comment type="similarity">
    <text evidence="1">Belongs to the herpesviridae inner tegument protein family.</text>
</comment>
<dbReference type="EMBL" id="X04370">
    <property type="protein sequence ID" value="CAA27904.1"/>
    <property type="molecule type" value="Genomic_DNA"/>
</dbReference>
<dbReference type="PIR" id="C27343">
    <property type="entry name" value="WZBE21"/>
</dbReference>
<dbReference type="SMR" id="P09277"/>
<dbReference type="Proteomes" id="UP000002602">
    <property type="component" value="Genome"/>
</dbReference>
<dbReference type="GO" id="GO:0044177">
    <property type="term" value="C:host cell Golgi apparatus"/>
    <property type="evidence" value="ECO:0007669"/>
    <property type="project" value="UniProtKB-SubCell"/>
</dbReference>
<dbReference type="GO" id="GO:0042025">
    <property type="term" value="C:host cell nucleus"/>
    <property type="evidence" value="ECO:0007669"/>
    <property type="project" value="UniProtKB-SubCell"/>
</dbReference>
<dbReference type="GO" id="GO:0019033">
    <property type="term" value="C:viral tegument"/>
    <property type="evidence" value="ECO:0007669"/>
    <property type="project" value="UniProtKB-SubCell"/>
</dbReference>
<dbReference type="GO" id="GO:0019068">
    <property type="term" value="P:virion assembly"/>
    <property type="evidence" value="ECO:0007669"/>
    <property type="project" value="InterPro"/>
</dbReference>
<dbReference type="HAMAP" id="MF_04043">
    <property type="entry name" value="HSV_ITP"/>
    <property type="match status" value="1"/>
</dbReference>
<dbReference type="InterPro" id="IPR005655">
    <property type="entry name" value="Herpes_UL37"/>
</dbReference>
<dbReference type="InterPro" id="IPR034738">
    <property type="entry name" value="HSV_ITP"/>
</dbReference>
<dbReference type="Pfam" id="PF03970">
    <property type="entry name" value="Herpes_UL37_1"/>
    <property type="match status" value="1"/>
</dbReference>
<proteinExistence type="inferred from homology"/>
<reference key="1">
    <citation type="journal article" date="1986" name="J. Gen. Virol.">
        <title>The complete DNA sequence of varicella-zoster virus.</title>
        <authorList>
            <person name="Davison A.J."/>
            <person name="Scott J.E."/>
        </authorList>
    </citation>
    <scope>NUCLEOTIDE SEQUENCE [LARGE SCALE GENOMIC DNA]</scope>
</reference>
<name>ITP_VZVD</name>
<organismHost>
    <name type="scientific">Homo sapiens</name>
    <name type="common">Human</name>
    <dbReference type="NCBI Taxonomy" id="9606"/>
</organismHost>
<accession>P09277</accession>
<protein>
    <recommendedName>
        <fullName evidence="1">Inner tegument protein</fullName>
    </recommendedName>
</protein>
<organism>
    <name type="scientific">Varicella-zoster virus (strain Dumas)</name>
    <name type="common">HHV-3</name>
    <name type="synonym">Human herpesvirus 3</name>
    <dbReference type="NCBI Taxonomy" id="10338"/>
    <lineage>
        <taxon>Viruses</taxon>
        <taxon>Duplodnaviria</taxon>
        <taxon>Heunggongvirae</taxon>
        <taxon>Peploviricota</taxon>
        <taxon>Herviviricetes</taxon>
        <taxon>Herpesvirales</taxon>
        <taxon>Orthoherpesviridae</taxon>
        <taxon>Alphaherpesvirinae</taxon>
        <taxon>Varicellovirus</taxon>
        <taxon>Varicellovirus humanalpha3</taxon>
        <taxon>Human herpesvirus 3</taxon>
    </lineage>
</organism>
<feature type="chain" id="PRO_0000116050" description="Inner tegument protein">
    <location>
        <begin position="1"/>
        <end position="1038"/>
    </location>
</feature>
<feature type="region of interest" description="Interaction with large tegument protein" evidence="1">
    <location>
        <begin position="545"/>
        <end position="1038"/>
    </location>
</feature>
<gene>
    <name type="primary">21</name>
</gene>
<evidence type="ECO:0000255" key="1">
    <source>
        <dbReference type="HAMAP-Rule" id="MF_04043"/>
    </source>
</evidence>
<sequence length="1038" mass="115780">MEEPICYDTQKLLDDLSNLKVQEADNERPWSPEKTEIARVKVVKFLRSTQKIPAKHFIQIWEPLHSNICFVYSNTFLAEAAFTAENLPGLLFWRLDLDWTIEEPGNSLKILTQLSSVVQDSETLHRLSANKLRTSSKFGPVSIHFIITDWINMYEVALKDATTAIESPFTHARIGMLESAIAALTQHKFAIIYDMPFVQEGIRVLTQYAGWLLPFNVMWNQIQNSSLTPLTRALFIICMIDEYLTETPVHSISELFADTVNLIKDEAFVSIEEAVTNPRTVHESRISSALAYRDPYVFETSPGMLARRLRLDNGIWESNLLSLSTPGIHIEALLHLLNSDPEAETTSGSNVAEHTRGIWEKVQASTSPSMLISTLAESGFTRFSCKLLRRFIAHHTLAGFIHGSVVADEHITDFQQTLGCLALVGGLAYQLVETYAPTTEYVLTYTRTVNETEKRYETLLPALGLPPGGLGQIMRRCFAPRPLIESIQATRVILLNEISHAEARETTYFKQTHNQSSGALLPQAGQSAVREAVLTWFDLRMDSRWGITPPVDVGMTPPICVDPPATGLEAVMITEALKIAYPTEYNRSSVFVEPSFVPYIIATSTLDALSATIALSFDTRGIQQALSILQWARDYGSGTVPNADGYRTKLSALITILEPFTRTHPPVLLPSHVSTIDSLICELHRTVGIAVDLLPQHVRPLVPDRPSITNSVFLATLYYDELYGRWTRLDKTSQALVENFTSNALVVSRYMLMLQKFFACRFYPTPDLQAVGICNPKVERDEQFGVWRLNDLADAVGHIVGTIQGIRTQMRVGISSLRTIMADASSALRECENLMTKTSTSAIGPLFSTMASRYARFTQDQMDILMRVDKLTTGENIPGLANVEIFLNRWERIATACRHATAVPSAESIATVCNELRRGLKNIQEDRVNAPTSYMSHARNLEDHKAAVSFVMDSRQQFIVDSGPQMGAVLTSQCNIGTWENVNATFLHDNVKITTTVRDVISEAPTLIIGQRWLRPDEILSNVDLRLGVPGNTSGSDP</sequence>